<feature type="chain" id="PRO_0000388725" description="Iron-sulfur cluster assembly protein SufD">
    <location>
        <begin position="1"/>
        <end position="437"/>
    </location>
</feature>
<protein>
    <recommendedName>
        <fullName>Iron-sulfur cluster assembly protein SufD</fullName>
    </recommendedName>
</protein>
<organism>
    <name type="scientific">Bacillus subtilis (strain 168)</name>
    <dbReference type="NCBI Taxonomy" id="224308"/>
    <lineage>
        <taxon>Bacteria</taxon>
        <taxon>Bacillati</taxon>
        <taxon>Bacillota</taxon>
        <taxon>Bacilli</taxon>
        <taxon>Bacillales</taxon>
        <taxon>Bacillaceae</taxon>
        <taxon>Bacillus</taxon>
    </lineage>
</organism>
<proteinExistence type="inferred from homology"/>
<sequence>MTLGTKLSVDQEYLKSFSEKHQEPAWLKNLRLQALEQAEDLPMPKPDKTKITNWNFTNFAKHTVDNEPLSSLEDLTDEVKALIDIENEDKTLYVQRDQTPAHLSLSQELKDKGVIFTDILTAAREHSDLVEKYFMKDGVKVDEHKLTALHAALVNGGAFLYVPKNVQVETPVQAVYVHESNDTALFNHVLIVAEDHSSVTYVENYISTVNPKDAVFNIISEVITGDNASVTYGAVDNLSSGVTTYVNRRGAARGRDSKIEWALGLMNDGDTISENTTNLYGDGTYGDTKTVVVGRGEQTENFTTQIIHFGKASEGYILKHGVMKDSASSIFNGIGKIEHGASKANAEQESRVLMLSEKARGDANPILLIDEDDVTAGHAASVGRVDPIQLYYLMSRGIPKEEAERLVIYGFLAPVVNELPIEGVKKQLVSVIERKVK</sequence>
<accession>O32165</accession>
<dbReference type="EMBL" id="AL009126">
    <property type="protein sequence ID" value="CAB15259.1"/>
    <property type="molecule type" value="Genomic_DNA"/>
</dbReference>
<dbReference type="PIR" id="G70019">
    <property type="entry name" value="G70019"/>
</dbReference>
<dbReference type="RefSeq" id="NP_391149.1">
    <property type="nucleotide sequence ID" value="NC_000964.3"/>
</dbReference>
<dbReference type="RefSeq" id="WP_003228602.1">
    <property type="nucleotide sequence ID" value="NZ_OZ025638.1"/>
</dbReference>
<dbReference type="SMR" id="O32165"/>
<dbReference type="FunCoup" id="O32165">
    <property type="interactions" value="8"/>
</dbReference>
<dbReference type="IntAct" id="O32165">
    <property type="interactions" value="2"/>
</dbReference>
<dbReference type="MINT" id="O32165"/>
<dbReference type="STRING" id="224308.BSU32700"/>
<dbReference type="jPOST" id="O32165"/>
<dbReference type="PaxDb" id="224308-BSU32700"/>
<dbReference type="EnsemblBacteria" id="CAB15259">
    <property type="protein sequence ID" value="CAB15259"/>
    <property type="gene ID" value="BSU_32700"/>
</dbReference>
<dbReference type="GeneID" id="938871"/>
<dbReference type="KEGG" id="bsu:BSU32700"/>
<dbReference type="PATRIC" id="fig|224308.179.peg.3541"/>
<dbReference type="eggNOG" id="COG0719">
    <property type="taxonomic scope" value="Bacteria"/>
</dbReference>
<dbReference type="InParanoid" id="O32165"/>
<dbReference type="OrthoDB" id="9803529at2"/>
<dbReference type="PhylomeDB" id="O32165"/>
<dbReference type="BioCyc" id="BSUB:BSU32700-MONOMER"/>
<dbReference type="Proteomes" id="UP000001570">
    <property type="component" value="Chromosome"/>
</dbReference>
<dbReference type="GO" id="GO:0016226">
    <property type="term" value="P:iron-sulfur cluster assembly"/>
    <property type="evidence" value="ECO:0007669"/>
    <property type="project" value="InterPro"/>
</dbReference>
<dbReference type="InterPro" id="IPR055346">
    <property type="entry name" value="Fe-S_cluster_assembly_SufBD"/>
</dbReference>
<dbReference type="InterPro" id="IPR000825">
    <property type="entry name" value="SUF_FeS_clus_asmbl_SufBD_core"/>
</dbReference>
<dbReference type="InterPro" id="IPR037284">
    <property type="entry name" value="SUF_FeS_clus_asmbl_SufBD_sf"/>
</dbReference>
<dbReference type="InterPro" id="IPR011542">
    <property type="entry name" value="SUF_FeS_clus_asmbl_SufD"/>
</dbReference>
<dbReference type="InterPro" id="IPR045595">
    <property type="entry name" value="SufBD_N"/>
</dbReference>
<dbReference type="NCBIfam" id="TIGR01981">
    <property type="entry name" value="sufD"/>
    <property type="match status" value="1"/>
</dbReference>
<dbReference type="PANTHER" id="PTHR30508">
    <property type="entry name" value="FES CLUSTER ASSEMBLY PROTEIN SUF"/>
    <property type="match status" value="1"/>
</dbReference>
<dbReference type="PANTHER" id="PTHR30508:SF1">
    <property type="entry name" value="UPF0051 PROTEIN ABCI8, CHLOROPLASTIC-RELATED"/>
    <property type="match status" value="1"/>
</dbReference>
<dbReference type="Pfam" id="PF01458">
    <property type="entry name" value="SUFBD_core"/>
    <property type="match status" value="1"/>
</dbReference>
<dbReference type="Pfam" id="PF19295">
    <property type="entry name" value="SufBD_N"/>
    <property type="match status" value="1"/>
</dbReference>
<dbReference type="SUPFAM" id="SSF101960">
    <property type="entry name" value="Stabilizer of iron transporter SufD"/>
    <property type="match status" value="1"/>
</dbReference>
<evidence type="ECO:0000250" key="1"/>
<evidence type="ECO:0000305" key="2"/>
<gene>
    <name type="primary">sufD</name>
    <name type="synonym">yurX</name>
    <name type="ordered locus">BSU32700</name>
</gene>
<comment type="function">
    <text evidence="1">The SufBCD complex acts synergistically with SufE to stimulate the cysteine desulfurase activity of SufS. The SufBCD complex contributes to the assembly or repair of oxygen-labile iron-sulfur clusters under oxidative stress. May facilitate iron uptake from extracellular iron chelators under iron limitation (By similarity).</text>
</comment>
<comment type="subunit">
    <text evidence="1">Part of the SufBCD complex that contains SufB, SufC and SufD.</text>
</comment>
<comment type="similarity">
    <text evidence="2">Belongs to the iron-sulfur cluster assembly SufBD family.</text>
</comment>
<keyword id="KW-1185">Reference proteome</keyword>
<name>SUFD_BACSU</name>
<reference key="1">
    <citation type="journal article" date="1997" name="Nature">
        <title>The complete genome sequence of the Gram-positive bacterium Bacillus subtilis.</title>
        <authorList>
            <person name="Kunst F."/>
            <person name="Ogasawara N."/>
            <person name="Moszer I."/>
            <person name="Albertini A.M."/>
            <person name="Alloni G."/>
            <person name="Azevedo V."/>
            <person name="Bertero M.G."/>
            <person name="Bessieres P."/>
            <person name="Bolotin A."/>
            <person name="Borchert S."/>
            <person name="Borriss R."/>
            <person name="Boursier L."/>
            <person name="Brans A."/>
            <person name="Braun M."/>
            <person name="Brignell S.C."/>
            <person name="Bron S."/>
            <person name="Brouillet S."/>
            <person name="Bruschi C.V."/>
            <person name="Caldwell B."/>
            <person name="Capuano V."/>
            <person name="Carter N.M."/>
            <person name="Choi S.-K."/>
            <person name="Codani J.-J."/>
            <person name="Connerton I.F."/>
            <person name="Cummings N.J."/>
            <person name="Daniel R.A."/>
            <person name="Denizot F."/>
            <person name="Devine K.M."/>
            <person name="Duesterhoeft A."/>
            <person name="Ehrlich S.D."/>
            <person name="Emmerson P.T."/>
            <person name="Entian K.-D."/>
            <person name="Errington J."/>
            <person name="Fabret C."/>
            <person name="Ferrari E."/>
            <person name="Foulger D."/>
            <person name="Fritz C."/>
            <person name="Fujita M."/>
            <person name="Fujita Y."/>
            <person name="Fuma S."/>
            <person name="Galizzi A."/>
            <person name="Galleron N."/>
            <person name="Ghim S.-Y."/>
            <person name="Glaser P."/>
            <person name="Goffeau A."/>
            <person name="Golightly E.J."/>
            <person name="Grandi G."/>
            <person name="Guiseppi G."/>
            <person name="Guy B.J."/>
            <person name="Haga K."/>
            <person name="Haiech J."/>
            <person name="Harwood C.R."/>
            <person name="Henaut A."/>
            <person name="Hilbert H."/>
            <person name="Holsappel S."/>
            <person name="Hosono S."/>
            <person name="Hullo M.-F."/>
            <person name="Itaya M."/>
            <person name="Jones L.-M."/>
            <person name="Joris B."/>
            <person name="Karamata D."/>
            <person name="Kasahara Y."/>
            <person name="Klaerr-Blanchard M."/>
            <person name="Klein C."/>
            <person name="Kobayashi Y."/>
            <person name="Koetter P."/>
            <person name="Koningstein G."/>
            <person name="Krogh S."/>
            <person name="Kumano M."/>
            <person name="Kurita K."/>
            <person name="Lapidus A."/>
            <person name="Lardinois S."/>
            <person name="Lauber J."/>
            <person name="Lazarevic V."/>
            <person name="Lee S.-M."/>
            <person name="Levine A."/>
            <person name="Liu H."/>
            <person name="Masuda S."/>
            <person name="Mauel C."/>
            <person name="Medigue C."/>
            <person name="Medina N."/>
            <person name="Mellado R.P."/>
            <person name="Mizuno M."/>
            <person name="Moestl D."/>
            <person name="Nakai S."/>
            <person name="Noback M."/>
            <person name="Noone D."/>
            <person name="O'Reilly M."/>
            <person name="Ogawa K."/>
            <person name="Ogiwara A."/>
            <person name="Oudega B."/>
            <person name="Park S.-H."/>
            <person name="Parro V."/>
            <person name="Pohl T.M."/>
            <person name="Portetelle D."/>
            <person name="Porwollik S."/>
            <person name="Prescott A.M."/>
            <person name="Presecan E."/>
            <person name="Pujic P."/>
            <person name="Purnelle B."/>
            <person name="Rapoport G."/>
            <person name="Rey M."/>
            <person name="Reynolds S."/>
            <person name="Rieger M."/>
            <person name="Rivolta C."/>
            <person name="Rocha E."/>
            <person name="Roche B."/>
            <person name="Rose M."/>
            <person name="Sadaie Y."/>
            <person name="Sato T."/>
            <person name="Scanlan E."/>
            <person name="Schleich S."/>
            <person name="Schroeter R."/>
            <person name="Scoffone F."/>
            <person name="Sekiguchi J."/>
            <person name="Sekowska A."/>
            <person name="Seror S.J."/>
            <person name="Serror P."/>
            <person name="Shin B.-S."/>
            <person name="Soldo B."/>
            <person name="Sorokin A."/>
            <person name="Tacconi E."/>
            <person name="Takagi T."/>
            <person name="Takahashi H."/>
            <person name="Takemaru K."/>
            <person name="Takeuchi M."/>
            <person name="Tamakoshi A."/>
            <person name="Tanaka T."/>
            <person name="Terpstra P."/>
            <person name="Tognoni A."/>
            <person name="Tosato V."/>
            <person name="Uchiyama S."/>
            <person name="Vandenbol M."/>
            <person name="Vannier F."/>
            <person name="Vassarotti A."/>
            <person name="Viari A."/>
            <person name="Wambutt R."/>
            <person name="Wedler E."/>
            <person name="Wedler H."/>
            <person name="Weitzenegger T."/>
            <person name="Winters P."/>
            <person name="Wipat A."/>
            <person name="Yamamoto H."/>
            <person name="Yamane K."/>
            <person name="Yasumoto K."/>
            <person name="Yata K."/>
            <person name="Yoshida K."/>
            <person name="Yoshikawa H.-F."/>
            <person name="Zumstein E."/>
            <person name="Yoshikawa H."/>
            <person name="Danchin A."/>
        </authorList>
    </citation>
    <scope>NUCLEOTIDE SEQUENCE [LARGE SCALE GENOMIC DNA]</scope>
    <source>
        <strain>168</strain>
    </source>
</reference>